<evidence type="ECO:0000255" key="1">
    <source>
        <dbReference type="HAMAP-Rule" id="MF_00139"/>
    </source>
</evidence>
<evidence type="ECO:0000255" key="2">
    <source>
        <dbReference type="PROSITE-ProRule" id="PRU01202"/>
    </source>
</evidence>
<reference key="1">
    <citation type="submission" date="2008-05" db="EMBL/GenBank/DDBJ databases">
        <title>Complete sequence of Shigella boydii serotype 18 strain BS512.</title>
        <authorList>
            <person name="Rasko D.A."/>
            <person name="Rosovitz M."/>
            <person name="Maurelli A.T."/>
            <person name="Myers G."/>
            <person name="Seshadri R."/>
            <person name="Cer R."/>
            <person name="Jiang L."/>
            <person name="Ravel J."/>
            <person name="Sebastian Y."/>
        </authorList>
    </citation>
    <scope>NUCLEOTIDE SEQUENCE [LARGE SCALE GENOMIC DNA]</scope>
    <source>
        <strain>CDC 3083-94 / BS512</strain>
    </source>
</reference>
<keyword id="KW-0007">Acetylation</keyword>
<keyword id="KW-0378">Hydrolase</keyword>
<keyword id="KW-0511">Multifunctional enzyme</keyword>
<keyword id="KW-0658">Purine biosynthesis</keyword>
<keyword id="KW-1185">Reference proteome</keyword>
<keyword id="KW-0808">Transferase</keyword>
<name>PUR9_SHIB3</name>
<protein>
    <recommendedName>
        <fullName evidence="1">Bifunctional purine biosynthesis protein PurH</fullName>
    </recommendedName>
    <domain>
        <recommendedName>
            <fullName evidence="1">Phosphoribosylaminoimidazolecarboxamide formyltransferase</fullName>
            <ecNumber evidence="1">2.1.2.3</ecNumber>
        </recommendedName>
        <alternativeName>
            <fullName evidence="1">AICAR transformylase</fullName>
        </alternativeName>
    </domain>
    <domain>
        <recommendedName>
            <fullName evidence="1">IMP cyclohydrolase</fullName>
            <ecNumber evidence="1">3.5.4.10</ecNumber>
        </recommendedName>
        <alternativeName>
            <fullName evidence="1">ATIC</fullName>
        </alternativeName>
        <alternativeName>
            <fullName evidence="1">IMP synthase</fullName>
        </alternativeName>
        <alternativeName>
            <fullName evidence="1">Inosinicase</fullName>
        </alternativeName>
    </domain>
</protein>
<comment type="catalytic activity">
    <reaction evidence="1">
        <text>(6R)-10-formyltetrahydrofolate + 5-amino-1-(5-phospho-beta-D-ribosyl)imidazole-4-carboxamide = 5-formamido-1-(5-phospho-D-ribosyl)imidazole-4-carboxamide + (6S)-5,6,7,8-tetrahydrofolate</text>
        <dbReference type="Rhea" id="RHEA:22192"/>
        <dbReference type="ChEBI" id="CHEBI:57453"/>
        <dbReference type="ChEBI" id="CHEBI:58467"/>
        <dbReference type="ChEBI" id="CHEBI:58475"/>
        <dbReference type="ChEBI" id="CHEBI:195366"/>
        <dbReference type="EC" id="2.1.2.3"/>
    </reaction>
</comment>
<comment type="catalytic activity">
    <reaction evidence="1">
        <text>IMP + H2O = 5-formamido-1-(5-phospho-D-ribosyl)imidazole-4-carboxamide</text>
        <dbReference type="Rhea" id="RHEA:18445"/>
        <dbReference type="ChEBI" id="CHEBI:15377"/>
        <dbReference type="ChEBI" id="CHEBI:58053"/>
        <dbReference type="ChEBI" id="CHEBI:58467"/>
        <dbReference type="EC" id="3.5.4.10"/>
    </reaction>
</comment>
<comment type="pathway">
    <text evidence="1">Purine metabolism; IMP biosynthesis via de novo pathway; 5-formamido-1-(5-phospho-D-ribosyl)imidazole-4-carboxamide from 5-amino-1-(5-phospho-D-ribosyl)imidazole-4-carboxamide (10-formyl THF route): step 1/1.</text>
</comment>
<comment type="pathway">
    <text evidence="1">Purine metabolism; IMP biosynthesis via de novo pathway; IMP from 5-formamido-1-(5-phospho-D-ribosyl)imidazole-4-carboxamide: step 1/1.</text>
</comment>
<comment type="domain">
    <text evidence="1">The IMP cyclohydrolase activity resides in the N-terminal region.</text>
</comment>
<comment type="similarity">
    <text evidence="1">Belongs to the PurH family.</text>
</comment>
<feature type="chain" id="PRO_1000096097" description="Bifunctional purine biosynthesis protein PurH">
    <location>
        <begin position="1"/>
        <end position="529"/>
    </location>
</feature>
<feature type="domain" description="MGS-like" evidence="2">
    <location>
        <begin position="1"/>
        <end position="148"/>
    </location>
</feature>
<feature type="modified residue" description="N6-acetyllysine" evidence="1">
    <location>
        <position position="287"/>
    </location>
</feature>
<dbReference type="EC" id="2.1.2.3" evidence="1"/>
<dbReference type="EC" id="3.5.4.10" evidence="1"/>
<dbReference type="EMBL" id="CP001063">
    <property type="protein sequence ID" value="ACD10175.1"/>
    <property type="molecule type" value="Genomic_DNA"/>
</dbReference>
<dbReference type="RefSeq" id="WP_001187566.1">
    <property type="nucleotide sequence ID" value="NC_010658.1"/>
</dbReference>
<dbReference type="SMR" id="B2TWJ3"/>
<dbReference type="STRING" id="344609.SbBS512_E4498"/>
<dbReference type="KEGG" id="sbc:SbBS512_E4498"/>
<dbReference type="HOGENOM" id="CLU_016316_5_2_6"/>
<dbReference type="UniPathway" id="UPA00074">
    <property type="reaction ID" value="UER00133"/>
</dbReference>
<dbReference type="UniPathway" id="UPA00074">
    <property type="reaction ID" value="UER00135"/>
</dbReference>
<dbReference type="Proteomes" id="UP000001030">
    <property type="component" value="Chromosome"/>
</dbReference>
<dbReference type="GO" id="GO:0005829">
    <property type="term" value="C:cytosol"/>
    <property type="evidence" value="ECO:0007669"/>
    <property type="project" value="TreeGrafter"/>
</dbReference>
<dbReference type="GO" id="GO:0003937">
    <property type="term" value="F:IMP cyclohydrolase activity"/>
    <property type="evidence" value="ECO:0007669"/>
    <property type="project" value="UniProtKB-UniRule"/>
</dbReference>
<dbReference type="GO" id="GO:0004643">
    <property type="term" value="F:phosphoribosylaminoimidazolecarboxamide formyltransferase activity"/>
    <property type="evidence" value="ECO:0007669"/>
    <property type="project" value="UniProtKB-UniRule"/>
</dbReference>
<dbReference type="GO" id="GO:0006189">
    <property type="term" value="P:'de novo' IMP biosynthetic process"/>
    <property type="evidence" value="ECO:0007669"/>
    <property type="project" value="UniProtKB-UniRule"/>
</dbReference>
<dbReference type="CDD" id="cd01421">
    <property type="entry name" value="IMPCH"/>
    <property type="match status" value="1"/>
</dbReference>
<dbReference type="FunFam" id="3.40.140.20:FF:000001">
    <property type="entry name" value="Bifunctional purine biosynthesis protein PurH"/>
    <property type="match status" value="1"/>
</dbReference>
<dbReference type="FunFam" id="3.40.140.20:FF:000002">
    <property type="entry name" value="Bifunctional purine biosynthesis protein PurH"/>
    <property type="match status" value="1"/>
</dbReference>
<dbReference type="FunFam" id="3.40.50.1380:FF:000001">
    <property type="entry name" value="Bifunctional purine biosynthesis protein PurH"/>
    <property type="match status" value="1"/>
</dbReference>
<dbReference type="Gene3D" id="3.40.140.20">
    <property type="match status" value="2"/>
</dbReference>
<dbReference type="Gene3D" id="3.40.50.1380">
    <property type="entry name" value="Methylglyoxal synthase-like domain"/>
    <property type="match status" value="1"/>
</dbReference>
<dbReference type="HAMAP" id="MF_00139">
    <property type="entry name" value="PurH"/>
    <property type="match status" value="1"/>
</dbReference>
<dbReference type="InterPro" id="IPR024051">
    <property type="entry name" value="AICAR_Tfase_dup_dom_sf"/>
</dbReference>
<dbReference type="InterPro" id="IPR016193">
    <property type="entry name" value="Cytidine_deaminase-like"/>
</dbReference>
<dbReference type="InterPro" id="IPR011607">
    <property type="entry name" value="MGS-like_dom"/>
</dbReference>
<dbReference type="InterPro" id="IPR036914">
    <property type="entry name" value="MGS-like_dom_sf"/>
</dbReference>
<dbReference type="InterPro" id="IPR002695">
    <property type="entry name" value="PurH-like"/>
</dbReference>
<dbReference type="NCBIfam" id="NF002049">
    <property type="entry name" value="PRK00881.1"/>
    <property type="match status" value="1"/>
</dbReference>
<dbReference type="NCBIfam" id="TIGR00355">
    <property type="entry name" value="purH"/>
    <property type="match status" value="1"/>
</dbReference>
<dbReference type="PANTHER" id="PTHR11692:SF0">
    <property type="entry name" value="BIFUNCTIONAL PURINE BIOSYNTHESIS PROTEIN ATIC"/>
    <property type="match status" value="1"/>
</dbReference>
<dbReference type="PANTHER" id="PTHR11692">
    <property type="entry name" value="BIFUNCTIONAL PURINE BIOSYNTHESIS PROTEIN PURH"/>
    <property type="match status" value="1"/>
</dbReference>
<dbReference type="Pfam" id="PF01808">
    <property type="entry name" value="AICARFT_IMPCHas"/>
    <property type="match status" value="1"/>
</dbReference>
<dbReference type="Pfam" id="PF02142">
    <property type="entry name" value="MGS"/>
    <property type="match status" value="1"/>
</dbReference>
<dbReference type="PIRSF" id="PIRSF000414">
    <property type="entry name" value="AICARFT_IMPCHas"/>
    <property type="match status" value="1"/>
</dbReference>
<dbReference type="SMART" id="SM00798">
    <property type="entry name" value="AICARFT_IMPCHas"/>
    <property type="match status" value="1"/>
</dbReference>
<dbReference type="SMART" id="SM00851">
    <property type="entry name" value="MGS"/>
    <property type="match status" value="1"/>
</dbReference>
<dbReference type="SUPFAM" id="SSF53927">
    <property type="entry name" value="Cytidine deaminase-like"/>
    <property type="match status" value="1"/>
</dbReference>
<dbReference type="SUPFAM" id="SSF52335">
    <property type="entry name" value="Methylglyoxal synthase-like"/>
    <property type="match status" value="1"/>
</dbReference>
<dbReference type="PROSITE" id="PS51855">
    <property type="entry name" value="MGS"/>
    <property type="match status" value="1"/>
</dbReference>
<gene>
    <name evidence="1" type="primary">purH</name>
    <name type="ordered locus">SbBS512_E4498</name>
</gene>
<sequence length="529" mass="57358">MQQRRPVRRALLSVSDKAGIVEFAQALSARGVELLSTGGTARLLAEKGLPVTEVSDYTGFPEMMDGRVKTLHPKVHGGILGRRGQDDAIMEEHQIQPIDMVVVNLYPFAQTVAREGCSLEDAVENIDIGGPTMVRSAAKNHKDVAIVVKSSDYDAIIKEMDDNEGSLTLATRFDLAIKAFEHTAAYDSMIANYFGSMVPAYHGESKEAAGRFPRTLNLNFIKKQDMRYGENSHQQAAFYIEENVKEASVATATQVQGKALSYNNIADTDAALECVKEFAEPACVIVKHANPCGVAIGNSILDAYDRAYKTDPTSAFGGIIAFNRELDAETAQAIISRQFVEVIIAPSASEEALKITAAKQNVRVLTCGQWGERVPGLDFKRVNGGLLVQDRDLGMVGAEELRVVTQRQPTEQELRDALFCWKVAKFVKSNAIVYAKNNMTIGIGAGQMSRVYSAKIAGIKAADEGLEVKGSSMASDAFFPFRDGIDAAAAAGVTCVIQPGGSIRDDEVIAAADEHGIAMLFTDMRHFRH</sequence>
<proteinExistence type="inferred from homology"/>
<accession>B2TWJ3</accession>
<organism>
    <name type="scientific">Shigella boydii serotype 18 (strain CDC 3083-94 / BS512)</name>
    <dbReference type="NCBI Taxonomy" id="344609"/>
    <lineage>
        <taxon>Bacteria</taxon>
        <taxon>Pseudomonadati</taxon>
        <taxon>Pseudomonadota</taxon>
        <taxon>Gammaproteobacteria</taxon>
        <taxon>Enterobacterales</taxon>
        <taxon>Enterobacteriaceae</taxon>
        <taxon>Shigella</taxon>
    </lineage>
</organism>